<organism>
    <name type="scientific">Teredinibacter turnerae (strain ATCC 39867 / T7901)</name>
    <dbReference type="NCBI Taxonomy" id="377629"/>
    <lineage>
        <taxon>Bacteria</taxon>
        <taxon>Pseudomonadati</taxon>
        <taxon>Pseudomonadota</taxon>
        <taxon>Gammaproteobacteria</taxon>
        <taxon>Cellvibrionales</taxon>
        <taxon>Cellvibrionaceae</taxon>
        <taxon>Teredinibacter</taxon>
    </lineage>
</organism>
<gene>
    <name evidence="1" type="primary">rpmB</name>
    <name type="ordered locus">TERTU_0181</name>
</gene>
<evidence type="ECO:0000255" key="1">
    <source>
        <dbReference type="HAMAP-Rule" id="MF_00373"/>
    </source>
</evidence>
<evidence type="ECO:0000256" key="2">
    <source>
        <dbReference type="SAM" id="MobiDB-lite"/>
    </source>
</evidence>
<evidence type="ECO:0000305" key="3"/>
<dbReference type="EMBL" id="CP001614">
    <property type="protein sequence ID" value="ACR12168.1"/>
    <property type="molecule type" value="Genomic_DNA"/>
</dbReference>
<dbReference type="RefSeq" id="WP_015818280.1">
    <property type="nucleotide sequence ID" value="NC_012997.1"/>
</dbReference>
<dbReference type="SMR" id="C5BLG3"/>
<dbReference type="STRING" id="377629.TERTU_0181"/>
<dbReference type="GeneID" id="58408071"/>
<dbReference type="GeneID" id="93858371"/>
<dbReference type="KEGG" id="ttu:TERTU_0181"/>
<dbReference type="eggNOG" id="COG0227">
    <property type="taxonomic scope" value="Bacteria"/>
</dbReference>
<dbReference type="HOGENOM" id="CLU_064548_3_1_6"/>
<dbReference type="OrthoDB" id="9805609at2"/>
<dbReference type="Proteomes" id="UP000009080">
    <property type="component" value="Chromosome"/>
</dbReference>
<dbReference type="GO" id="GO:0022625">
    <property type="term" value="C:cytosolic large ribosomal subunit"/>
    <property type="evidence" value="ECO:0007669"/>
    <property type="project" value="TreeGrafter"/>
</dbReference>
<dbReference type="GO" id="GO:0003735">
    <property type="term" value="F:structural constituent of ribosome"/>
    <property type="evidence" value="ECO:0007669"/>
    <property type="project" value="InterPro"/>
</dbReference>
<dbReference type="GO" id="GO:0006412">
    <property type="term" value="P:translation"/>
    <property type="evidence" value="ECO:0007669"/>
    <property type="project" value="UniProtKB-UniRule"/>
</dbReference>
<dbReference type="FunFam" id="2.30.170.40:FF:000001">
    <property type="entry name" value="50S ribosomal protein L28"/>
    <property type="match status" value="1"/>
</dbReference>
<dbReference type="Gene3D" id="2.30.170.40">
    <property type="entry name" value="Ribosomal protein L28/L24"/>
    <property type="match status" value="1"/>
</dbReference>
<dbReference type="HAMAP" id="MF_00373">
    <property type="entry name" value="Ribosomal_bL28"/>
    <property type="match status" value="1"/>
</dbReference>
<dbReference type="InterPro" id="IPR026569">
    <property type="entry name" value="Ribosomal_bL28"/>
</dbReference>
<dbReference type="InterPro" id="IPR034704">
    <property type="entry name" value="Ribosomal_bL28/bL31-like_sf"/>
</dbReference>
<dbReference type="InterPro" id="IPR001383">
    <property type="entry name" value="Ribosomal_bL28_bact-type"/>
</dbReference>
<dbReference type="InterPro" id="IPR037147">
    <property type="entry name" value="Ribosomal_bL28_sf"/>
</dbReference>
<dbReference type="NCBIfam" id="TIGR00009">
    <property type="entry name" value="L28"/>
    <property type="match status" value="1"/>
</dbReference>
<dbReference type="PANTHER" id="PTHR13528">
    <property type="entry name" value="39S RIBOSOMAL PROTEIN L28, MITOCHONDRIAL"/>
    <property type="match status" value="1"/>
</dbReference>
<dbReference type="PANTHER" id="PTHR13528:SF2">
    <property type="entry name" value="LARGE RIBOSOMAL SUBUNIT PROTEIN BL28M"/>
    <property type="match status" value="1"/>
</dbReference>
<dbReference type="Pfam" id="PF00830">
    <property type="entry name" value="Ribosomal_L28"/>
    <property type="match status" value="1"/>
</dbReference>
<dbReference type="SUPFAM" id="SSF143800">
    <property type="entry name" value="L28p-like"/>
    <property type="match status" value="1"/>
</dbReference>
<accession>C5BLG3</accession>
<sequence length="78" mass="9033">MAKVCQVTGKRPVTGHNVSHAKNHTKRRFLPNLHTHRFWVESEKRFVKLRVSSKGMRIIDKNGIETVLSDIRARGEKI</sequence>
<name>RL28_TERTT</name>
<reference key="1">
    <citation type="journal article" date="2009" name="PLoS ONE">
        <title>The complete genome of Teredinibacter turnerae T7901: an intracellular endosymbiont of marine wood-boring bivalves (shipworms).</title>
        <authorList>
            <person name="Yang J.C."/>
            <person name="Madupu R."/>
            <person name="Durkin A.S."/>
            <person name="Ekborg N.A."/>
            <person name="Pedamallu C.S."/>
            <person name="Hostetler J.B."/>
            <person name="Radune D."/>
            <person name="Toms B.S."/>
            <person name="Henrissat B."/>
            <person name="Coutinho P.M."/>
            <person name="Schwarz S."/>
            <person name="Field L."/>
            <person name="Trindade-Silva A.E."/>
            <person name="Soares C.A.G."/>
            <person name="Elshahawi S."/>
            <person name="Hanora A."/>
            <person name="Schmidt E.W."/>
            <person name="Haygood M.G."/>
            <person name="Posfai J."/>
            <person name="Benner J."/>
            <person name="Madinger C."/>
            <person name="Nove J."/>
            <person name="Anton B."/>
            <person name="Chaudhary K."/>
            <person name="Foster J."/>
            <person name="Holman A."/>
            <person name="Kumar S."/>
            <person name="Lessard P.A."/>
            <person name="Luyten Y.A."/>
            <person name="Slatko B."/>
            <person name="Wood N."/>
            <person name="Wu B."/>
            <person name="Teplitski M."/>
            <person name="Mougous J.D."/>
            <person name="Ward N."/>
            <person name="Eisen J.A."/>
            <person name="Badger J.H."/>
            <person name="Distel D.L."/>
        </authorList>
    </citation>
    <scope>NUCLEOTIDE SEQUENCE [LARGE SCALE GENOMIC DNA]</scope>
    <source>
        <strain>ATCC 39867 / T7901</strain>
    </source>
</reference>
<comment type="similarity">
    <text evidence="1">Belongs to the bacterial ribosomal protein bL28 family.</text>
</comment>
<feature type="chain" id="PRO_1000205612" description="Large ribosomal subunit protein bL28">
    <location>
        <begin position="1"/>
        <end position="78"/>
    </location>
</feature>
<feature type="region of interest" description="Disordered" evidence="2">
    <location>
        <begin position="1"/>
        <end position="22"/>
    </location>
</feature>
<protein>
    <recommendedName>
        <fullName evidence="1">Large ribosomal subunit protein bL28</fullName>
    </recommendedName>
    <alternativeName>
        <fullName evidence="3">50S ribosomal protein L28</fullName>
    </alternativeName>
</protein>
<proteinExistence type="inferred from homology"/>
<keyword id="KW-1185">Reference proteome</keyword>
<keyword id="KW-0687">Ribonucleoprotein</keyword>
<keyword id="KW-0689">Ribosomal protein</keyword>